<comment type="function">
    <text evidence="1">Snake venom zinc metalloprotease that induces apoptosis in vascular endothelial cells (VEC), without degrading the extracellular matrix (it cannot cleave collagen) or inhibiting adhesion of VEC. Has also fibrinogenolytic and hemorrhagic activities (By similarity).</text>
</comment>
<comment type="cofactor">
    <cofactor evidence="1">
        <name>Zn(2+)</name>
        <dbReference type="ChEBI" id="CHEBI:29105"/>
    </cofactor>
    <text evidence="1">Binds 1 zinc ion per subunit.</text>
</comment>
<comment type="subunit">
    <text evidence="1">Homodimer; disulfide-linked.</text>
</comment>
<comment type="subcellular location">
    <subcellularLocation>
        <location evidence="1">Secreted</location>
    </subcellularLocation>
</comment>
<comment type="tissue specificity">
    <text>Expressed by the venom gland.</text>
</comment>
<comment type="similarity">
    <text evidence="5">Belongs to the venom metalloproteinase (M12B) family. P-III subfamily. P-IIIc sub-subfamily.</text>
</comment>
<name>VM31_CRODU</name>
<reference key="1">
    <citation type="submission" date="2005-09" db="EMBL/GenBank/DDBJ databases">
        <title>Crotastatin, a novel snake venom apoptotic protein homolog from South American rattlesnake (Crotalus durissus terrificus).</title>
        <authorList>
            <person name="Radis-Baptista G."/>
            <person name="Prieto-da-Silva A.R."/>
            <person name="Yamane T."/>
        </authorList>
    </citation>
    <scope>NUCLEOTIDE SEQUENCE [MRNA]</scope>
    <source>
        <tissue>Venom gland</tissue>
    </source>
</reference>
<feature type="chain" id="PRO_0000418202" description="Zinc metalloproteinase-disintegrin-like crotastatin">
    <location>
        <begin position="1"/>
        <end position="421"/>
    </location>
</feature>
<feature type="domain" description="Peptidase M12B" evidence="4">
    <location>
        <begin position="10"/>
        <end position="206"/>
    </location>
</feature>
<feature type="domain" description="Disintegrin" evidence="3">
    <location>
        <begin position="214"/>
        <end position="299"/>
    </location>
</feature>
<feature type="short sequence motif" description="D/ECD-tripeptide">
    <location>
        <begin position="278"/>
        <end position="280"/>
    </location>
</feature>
<feature type="active site" evidence="4">
    <location>
        <position position="147"/>
    </location>
</feature>
<feature type="binding site" evidence="4">
    <location>
        <position position="146"/>
    </location>
    <ligand>
        <name>Zn(2+)</name>
        <dbReference type="ChEBI" id="CHEBI:29105"/>
        <note>catalytic</note>
    </ligand>
</feature>
<feature type="binding site" evidence="4">
    <location>
        <position position="150"/>
    </location>
    <ligand>
        <name>Zn(2+)</name>
        <dbReference type="ChEBI" id="CHEBI:29105"/>
        <note>catalytic</note>
    </ligand>
</feature>
<feature type="binding site" evidence="4">
    <location>
        <position position="156"/>
    </location>
    <ligand>
        <name>Zn(2+)</name>
        <dbReference type="ChEBI" id="CHEBI:29105"/>
        <note>catalytic</note>
    </ligand>
</feature>
<feature type="binding site" evidence="1">
    <location>
        <position position="216"/>
    </location>
    <ligand>
        <name>Ca(2+)</name>
        <dbReference type="ChEBI" id="CHEBI:29108"/>
        <label>1</label>
    </ligand>
</feature>
<feature type="binding site" evidence="1">
    <location>
        <position position="219"/>
    </location>
    <ligand>
        <name>Ca(2+)</name>
        <dbReference type="ChEBI" id="CHEBI:29108"/>
        <label>1</label>
    </ligand>
</feature>
<feature type="binding site" evidence="1">
    <location>
        <position position="221"/>
    </location>
    <ligand>
        <name>Ca(2+)</name>
        <dbReference type="ChEBI" id="CHEBI:29108"/>
        <label>1</label>
    </ligand>
</feature>
<feature type="binding site" evidence="1">
    <location>
        <position position="223"/>
    </location>
    <ligand>
        <name>Ca(2+)</name>
        <dbReference type="ChEBI" id="CHEBI:29108"/>
        <label>1</label>
    </ligand>
</feature>
<feature type="binding site" evidence="1">
    <location>
        <position position="226"/>
    </location>
    <ligand>
        <name>Ca(2+)</name>
        <dbReference type="ChEBI" id="CHEBI:29108"/>
        <label>1</label>
    </ligand>
</feature>
<feature type="binding site" evidence="1">
    <location>
        <position position="229"/>
    </location>
    <ligand>
        <name>Ca(2+)</name>
        <dbReference type="ChEBI" id="CHEBI:29108"/>
        <label>1</label>
    </ligand>
</feature>
<feature type="binding site" evidence="1">
    <location>
        <position position="280"/>
    </location>
    <ligand>
        <name>Ca(2+)</name>
        <dbReference type="ChEBI" id="CHEBI:29108"/>
        <label>2</label>
    </ligand>
</feature>
<feature type="binding site" evidence="1">
    <location>
        <position position="281"/>
    </location>
    <ligand>
        <name>Ca(2+)</name>
        <dbReference type="ChEBI" id="CHEBI:29108"/>
        <label>2</label>
    </ligand>
</feature>
<feature type="binding site" evidence="1">
    <location>
        <position position="283"/>
    </location>
    <ligand>
        <name>Ca(2+)</name>
        <dbReference type="ChEBI" id="CHEBI:29108"/>
        <label>2</label>
    </ligand>
</feature>
<feature type="binding site" evidence="1">
    <location>
        <position position="294"/>
    </location>
    <ligand>
        <name>Ca(2+)</name>
        <dbReference type="ChEBI" id="CHEBI:29108"/>
        <label>2</label>
    </ligand>
</feature>
<feature type="binding site" evidence="1">
    <location>
        <position position="295"/>
    </location>
    <ligand>
        <name>Ca(2+)</name>
        <dbReference type="ChEBI" id="CHEBI:29108"/>
        <label>2</label>
    </ligand>
</feature>
<feature type="glycosylation site" description="N-linked (GlcNAc...) asparagine" evidence="2">
    <location>
        <position position="29"/>
    </location>
</feature>
<feature type="disulfide bond" evidence="1">
    <location>
        <begin position="121"/>
        <end position="201"/>
    </location>
</feature>
<feature type="disulfide bond" evidence="1">
    <location>
        <begin position="161"/>
        <end position="185"/>
    </location>
</feature>
<feature type="disulfide bond" evidence="1">
    <location>
        <begin position="163"/>
        <end position="168"/>
    </location>
</feature>
<feature type="disulfide bond" description="Interchain (with C-365)" evidence="3 4">
    <location>
        <position position="176"/>
    </location>
</feature>
<feature type="disulfide bond" evidence="1">
    <location>
        <begin position="217"/>
        <end position="246"/>
    </location>
</feature>
<feature type="disulfide bond" evidence="1">
    <location>
        <begin position="228"/>
        <end position="241"/>
    </location>
</feature>
<feature type="disulfide bond" evidence="1">
    <location>
        <begin position="230"/>
        <end position="236"/>
    </location>
</feature>
<feature type="disulfide bond" evidence="1">
    <location>
        <begin position="240"/>
        <end position="263"/>
    </location>
</feature>
<feature type="disulfide bond" evidence="1">
    <location>
        <begin position="254"/>
        <end position="260"/>
    </location>
</feature>
<feature type="disulfide bond" evidence="1">
    <location>
        <begin position="259"/>
        <end position="285"/>
    </location>
</feature>
<feature type="disulfide bond" evidence="1">
    <location>
        <begin position="272"/>
        <end position="292"/>
    </location>
</feature>
<feature type="disulfide bond" evidence="1">
    <location>
        <begin position="279"/>
        <end position="310"/>
    </location>
</feature>
<feature type="disulfide bond" evidence="1">
    <location>
        <begin position="303"/>
        <end position="315"/>
    </location>
</feature>
<feature type="disulfide bond" evidence="1">
    <location>
        <begin position="322"/>
        <end position="372"/>
    </location>
</feature>
<feature type="disulfide bond" evidence="1">
    <location>
        <begin position="337"/>
        <end position="383"/>
    </location>
</feature>
<feature type="disulfide bond" evidence="1">
    <location>
        <begin position="350"/>
        <end position="360"/>
    </location>
</feature>
<feature type="disulfide bond" evidence="1">
    <location>
        <begin position="367"/>
        <end position="409"/>
    </location>
</feature>
<feature type="disulfide bond" evidence="1">
    <location>
        <begin position="403"/>
        <end position="414"/>
    </location>
</feature>
<protein>
    <recommendedName>
        <fullName>Zinc metalloproteinase-disintegrin-like crotastatin</fullName>
        <ecNumber>3.4.24.-</ecNumber>
    </recommendedName>
    <alternativeName>
        <fullName>Snake venom metalloprotease</fullName>
        <shortName>SVMP</shortName>
    </alternativeName>
    <alternativeName>
        <fullName>Vascular apoptosis-inducing protein-like</fullName>
        <shortName>VAP-like</shortName>
    </alternativeName>
</protein>
<sequence>EQQRYLNAKKYVKLFLVADYIMYLKYGRNLTAVRTRMYDIDNVITPIYHRMNIHVALVGLEIWSNTDKIIVQSSADVTLDLFAKWRATDLLSRKSHDNAQLLTGINFNGPTAGLGYLGGICNTMYSAGIVQDHSKIHDLVAIAIAHEMGHNLGMDHDKDTCTCGTRPCIMAGALSCEASFLFSDCSQKDHQEFLIKNMPQCILKKPLKTDVVSPAVCGNYFVEVGEECDCGPPRTCRDPCCDAATCKLRQGAQCAEGLCCDQCRFKGAGTECRAAKDECDMADVCTGRSTECTDRFQRNGQPCKNNNGYCYNGKCPIMADQCIALFGPGATVSQDACFQFNREGNHYGYCRKEQNTKIACEPQDVKCGRLYCFPNSPENKNPCNIYYSPNDEDKGMVLPGTKCADGKACSNGQCVDVNTPY</sequence>
<keyword id="KW-0053">Apoptosis</keyword>
<keyword id="KW-0106">Calcium</keyword>
<keyword id="KW-1217">Cell adhesion impairing toxin</keyword>
<keyword id="KW-1015">Disulfide bond</keyword>
<keyword id="KW-1206">Fibrinogenolytic toxin</keyword>
<keyword id="KW-0325">Glycoprotein</keyword>
<keyword id="KW-1200">Hemorrhagic toxin</keyword>
<keyword id="KW-1199">Hemostasis impairing toxin</keyword>
<keyword id="KW-0378">Hydrolase</keyword>
<keyword id="KW-0479">Metal-binding</keyword>
<keyword id="KW-0482">Metalloprotease</keyword>
<keyword id="KW-0645">Protease</keyword>
<keyword id="KW-0964">Secreted</keyword>
<keyword id="KW-0800">Toxin</keyword>
<keyword id="KW-0862">Zinc</keyword>
<organism>
    <name type="scientific">Crotalus durissus terrificus</name>
    <name type="common">South American rattlesnake</name>
    <dbReference type="NCBI Taxonomy" id="8732"/>
    <lineage>
        <taxon>Eukaryota</taxon>
        <taxon>Metazoa</taxon>
        <taxon>Chordata</taxon>
        <taxon>Craniata</taxon>
        <taxon>Vertebrata</taxon>
        <taxon>Euteleostomi</taxon>
        <taxon>Lepidosauria</taxon>
        <taxon>Squamata</taxon>
        <taxon>Bifurcata</taxon>
        <taxon>Unidentata</taxon>
        <taxon>Episquamata</taxon>
        <taxon>Toxicofera</taxon>
        <taxon>Serpentes</taxon>
        <taxon>Colubroidea</taxon>
        <taxon>Viperidae</taxon>
        <taxon>Crotalinae</taxon>
        <taxon>Crotalus</taxon>
    </lineage>
</organism>
<dbReference type="EC" id="3.4.24.-"/>
<dbReference type="EMBL" id="DQ224420">
    <property type="protein sequence ID" value="ABB42830.1"/>
    <property type="molecule type" value="mRNA"/>
</dbReference>
<dbReference type="SMR" id="Q076D1"/>
<dbReference type="MEROPS" id="M12.186"/>
<dbReference type="GO" id="GO:0005576">
    <property type="term" value="C:extracellular region"/>
    <property type="evidence" value="ECO:0007669"/>
    <property type="project" value="UniProtKB-SubCell"/>
</dbReference>
<dbReference type="GO" id="GO:0005886">
    <property type="term" value="C:plasma membrane"/>
    <property type="evidence" value="ECO:0007669"/>
    <property type="project" value="TreeGrafter"/>
</dbReference>
<dbReference type="GO" id="GO:0046872">
    <property type="term" value="F:metal ion binding"/>
    <property type="evidence" value="ECO:0007669"/>
    <property type="project" value="UniProtKB-KW"/>
</dbReference>
<dbReference type="GO" id="GO:0004222">
    <property type="term" value="F:metalloendopeptidase activity"/>
    <property type="evidence" value="ECO:0007669"/>
    <property type="project" value="InterPro"/>
</dbReference>
<dbReference type="GO" id="GO:0090729">
    <property type="term" value="F:toxin activity"/>
    <property type="evidence" value="ECO:0007669"/>
    <property type="project" value="UniProtKB-KW"/>
</dbReference>
<dbReference type="GO" id="GO:0006915">
    <property type="term" value="P:apoptotic process"/>
    <property type="evidence" value="ECO:0007669"/>
    <property type="project" value="UniProtKB-KW"/>
</dbReference>
<dbReference type="GO" id="GO:0006508">
    <property type="term" value="P:proteolysis"/>
    <property type="evidence" value="ECO:0007669"/>
    <property type="project" value="UniProtKB-KW"/>
</dbReference>
<dbReference type="CDD" id="cd04269">
    <property type="entry name" value="ZnMc_adamalysin_II_like"/>
    <property type="match status" value="1"/>
</dbReference>
<dbReference type="FunFam" id="3.40.390.10:FF:000002">
    <property type="entry name" value="Disintegrin and metalloproteinase domain-containing protein 22"/>
    <property type="match status" value="1"/>
</dbReference>
<dbReference type="FunFam" id="4.10.70.10:FF:000001">
    <property type="entry name" value="Disintegrin and metalloproteinase domain-containing protein 22"/>
    <property type="match status" value="1"/>
</dbReference>
<dbReference type="Gene3D" id="3.40.390.10">
    <property type="entry name" value="Collagenase (Catalytic Domain)"/>
    <property type="match status" value="1"/>
</dbReference>
<dbReference type="Gene3D" id="4.10.70.10">
    <property type="entry name" value="Disintegrin domain"/>
    <property type="match status" value="1"/>
</dbReference>
<dbReference type="InterPro" id="IPR006586">
    <property type="entry name" value="ADAM_Cys-rich"/>
</dbReference>
<dbReference type="InterPro" id="IPR018358">
    <property type="entry name" value="Disintegrin_CS"/>
</dbReference>
<dbReference type="InterPro" id="IPR001762">
    <property type="entry name" value="Disintegrin_dom"/>
</dbReference>
<dbReference type="InterPro" id="IPR036436">
    <property type="entry name" value="Disintegrin_dom_sf"/>
</dbReference>
<dbReference type="InterPro" id="IPR024079">
    <property type="entry name" value="MetalloPept_cat_dom_sf"/>
</dbReference>
<dbReference type="InterPro" id="IPR001590">
    <property type="entry name" value="Peptidase_M12B"/>
</dbReference>
<dbReference type="InterPro" id="IPR034027">
    <property type="entry name" value="Reprolysin_adamalysin"/>
</dbReference>
<dbReference type="PANTHER" id="PTHR11905">
    <property type="entry name" value="ADAM A DISINTEGRIN AND METALLOPROTEASE DOMAIN"/>
    <property type="match status" value="1"/>
</dbReference>
<dbReference type="PANTHER" id="PTHR11905:SF32">
    <property type="entry name" value="DISINTEGRIN AND METALLOPROTEINASE DOMAIN-CONTAINING PROTEIN 28"/>
    <property type="match status" value="1"/>
</dbReference>
<dbReference type="Pfam" id="PF08516">
    <property type="entry name" value="ADAM_CR"/>
    <property type="match status" value="1"/>
</dbReference>
<dbReference type="Pfam" id="PF00200">
    <property type="entry name" value="Disintegrin"/>
    <property type="match status" value="1"/>
</dbReference>
<dbReference type="Pfam" id="PF01421">
    <property type="entry name" value="Reprolysin"/>
    <property type="match status" value="1"/>
</dbReference>
<dbReference type="PRINTS" id="PR00289">
    <property type="entry name" value="DISINTEGRIN"/>
</dbReference>
<dbReference type="SMART" id="SM00608">
    <property type="entry name" value="ACR"/>
    <property type="match status" value="1"/>
</dbReference>
<dbReference type="SMART" id="SM00050">
    <property type="entry name" value="DISIN"/>
    <property type="match status" value="1"/>
</dbReference>
<dbReference type="SUPFAM" id="SSF57552">
    <property type="entry name" value="Blood coagulation inhibitor (disintegrin)"/>
    <property type="match status" value="1"/>
</dbReference>
<dbReference type="SUPFAM" id="SSF55486">
    <property type="entry name" value="Metalloproteases ('zincins'), catalytic domain"/>
    <property type="match status" value="1"/>
</dbReference>
<dbReference type="PROSITE" id="PS50215">
    <property type="entry name" value="ADAM_MEPRO"/>
    <property type="match status" value="1"/>
</dbReference>
<dbReference type="PROSITE" id="PS00427">
    <property type="entry name" value="DISINTEGRIN_1"/>
    <property type="match status" value="1"/>
</dbReference>
<dbReference type="PROSITE" id="PS50214">
    <property type="entry name" value="DISINTEGRIN_2"/>
    <property type="match status" value="1"/>
</dbReference>
<dbReference type="PROSITE" id="PS00142">
    <property type="entry name" value="ZINC_PROTEASE"/>
    <property type="match status" value="1"/>
</dbReference>
<accession>Q076D1</accession>
<proteinExistence type="evidence at transcript level"/>
<evidence type="ECO:0000250" key="1"/>
<evidence type="ECO:0000255" key="2"/>
<evidence type="ECO:0000255" key="3">
    <source>
        <dbReference type="PROSITE-ProRule" id="PRU00068"/>
    </source>
</evidence>
<evidence type="ECO:0000255" key="4">
    <source>
        <dbReference type="PROSITE-ProRule" id="PRU00276"/>
    </source>
</evidence>
<evidence type="ECO:0000305" key="5"/>